<accession>Q8R0A5</accession>
<accession>A2AEC3</accession>
<accession>Q9CYK5</accession>
<accession>Q9D1S4</accession>
<protein>
    <recommendedName>
        <fullName>Transcription elongation factor A protein-like 3</fullName>
        <shortName>TCEA-like protein 3</shortName>
    </recommendedName>
    <alternativeName>
        <fullName>Transcription elongation factor S-II protein-like 3</fullName>
    </alternativeName>
</protein>
<name>TCAL3_MOUSE</name>
<proteinExistence type="evidence at protein level"/>
<organism>
    <name type="scientific">Mus musculus</name>
    <name type="common">Mouse</name>
    <dbReference type="NCBI Taxonomy" id="10090"/>
    <lineage>
        <taxon>Eukaryota</taxon>
        <taxon>Metazoa</taxon>
        <taxon>Chordata</taxon>
        <taxon>Craniata</taxon>
        <taxon>Vertebrata</taxon>
        <taxon>Euteleostomi</taxon>
        <taxon>Mammalia</taxon>
        <taxon>Eutheria</taxon>
        <taxon>Euarchontoglires</taxon>
        <taxon>Glires</taxon>
        <taxon>Rodentia</taxon>
        <taxon>Myomorpha</taxon>
        <taxon>Muroidea</taxon>
        <taxon>Muridae</taxon>
        <taxon>Murinae</taxon>
        <taxon>Mus</taxon>
        <taxon>Mus</taxon>
    </lineage>
</organism>
<comment type="function">
    <text>May be involved in transcriptional regulation.</text>
</comment>
<comment type="subcellular location">
    <subcellularLocation>
        <location evidence="2">Nucleus</location>
    </subcellularLocation>
</comment>
<comment type="similarity">
    <text evidence="2">Belongs to the TFS-II family. TFA subfamily.</text>
</comment>
<feature type="chain" id="PRO_0000239208" description="Transcription elongation factor A protein-like 3">
    <location>
        <begin position="1"/>
        <end position="200"/>
    </location>
</feature>
<feature type="region of interest" description="Disordered" evidence="1">
    <location>
        <begin position="1"/>
        <end position="200"/>
    </location>
</feature>
<feature type="compositionally biased region" description="Basic and acidic residues" evidence="1">
    <location>
        <begin position="1"/>
        <end position="19"/>
    </location>
</feature>
<feature type="compositionally biased region" description="Acidic residues" evidence="1">
    <location>
        <begin position="20"/>
        <end position="34"/>
    </location>
</feature>
<feature type="compositionally biased region" description="Basic and acidic residues" evidence="1">
    <location>
        <begin position="47"/>
        <end position="85"/>
    </location>
</feature>
<feature type="compositionally biased region" description="Basic and acidic residues" evidence="1">
    <location>
        <begin position="94"/>
        <end position="106"/>
    </location>
</feature>
<feature type="compositionally biased region" description="Basic and acidic residues" evidence="1">
    <location>
        <begin position="114"/>
        <end position="153"/>
    </location>
</feature>
<feature type="modified residue" description="Phosphoserine" evidence="3">
    <location>
        <position position="30"/>
    </location>
</feature>
<feature type="sequence conflict" description="In Ref. 1; BAB22610." evidence="2" ref="1">
    <original>D</original>
    <variation>Y</variation>
    <location>
        <position position="170"/>
    </location>
</feature>
<feature type="sequence conflict" description="In Ref. 3; AAH27131." evidence="2" ref="3">
    <original>L</original>
    <variation>P</variation>
    <location>
        <position position="200"/>
    </location>
</feature>
<sequence length="200" mass="22468">MEEVRGENEGKLEKEGKPEDEVEPEDEEKSDEDEKPDKKAKPAPRQGKPEEEAKPDEQGQDEGKPEKQGKSDGEGKRQGESKPDSQAKSASEARAAEKRPAEDYVPRKAKRKTDRGTDDSPKNSQEDLQDRHVSSEEMMRECADMTRAQEELRKRQKMGGFHWVPRDAQDALVPRGPRGVRGVRGGGGRSQRGLHDIPYL</sequence>
<gene>
    <name type="primary">Tceal3</name>
</gene>
<reference key="1">
    <citation type="journal article" date="2005" name="Science">
        <title>The transcriptional landscape of the mammalian genome.</title>
        <authorList>
            <person name="Carninci P."/>
            <person name="Kasukawa T."/>
            <person name="Katayama S."/>
            <person name="Gough J."/>
            <person name="Frith M.C."/>
            <person name="Maeda N."/>
            <person name="Oyama R."/>
            <person name="Ravasi T."/>
            <person name="Lenhard B."/>
            <person name="Wells C."/>
            <person name="Kodzius R."/>
            <person name="Shimokawa K."/>
            <person name="Bajic V.B."/>
            <person name="Brenner S.E."/>
            <person name="Batalov S."/>
            <person name="Forrest A.R."/>
            <person name="Zavolan M."/>
            <person name="Davis M.J."/>
            <person name="Wilming L.G."/>
            <person name="Aidinis V."/>
            <person name="Allen J.E."/>
            <person name="Ambesi-Impiombato A."/>
            <person name="Apweiler R."/>
            <person name="Aturaliya R.N."/>
            <person name="Bailey T.L."/>
            <person name="Bansal M."/>
            <person name="Baxter L."/>
            <person name="Beisel K.W."/>
            <person name="Bersano T."/>
            <person name="Bono H."/>
            <person name="Chalk A.M."/>
            <person name="Chiu K.P."/>
            <person name="Choudhary V."/>
            <person name="Christoffels A."/>
            <person name="Clutterbuck D.R."/>
            <person name="Crowe M.L."/>
            <person name="Dalla E."/>
            <person name="Dalrymple B.P."/>
            <person name="de Bono B."/>
            <person name="Della Gatta G."/>
            <person name="di Bernardo D."/>
            <person name="Down T."/>
            <person name="Engstrom P."/>
            <person name="Fagiolini M."/>
            <person name="Faulkner G."/>
            <person name="Fletcher C.F."/>
            <person name="Fukushima T."/>
            <person name="Furuno M."/>
            <person name="Futaki S."/>
            <person name="Gariboldi M."/>
            <person name="Georgii-Hemming P."/>
            <person name="Gingeras T.R."/>
            <person name="Gojobori T."/>
            <person name="Green R.E."/>
            <person name="Gustincich S."/>
            <person name="Harbers M."/>
            <person name="Hayashi Y."/>
            <person name="Hensch T.K."/>
            <person name="Hirokawa N."/>
            <person name="Hill D."/>
            <person name="Huminiecki L."/>
            <person name="Iacono M."/>
            <person name="Ikeo K."/>
            <person name="Iwama A."/>
            <person name="Ishikawa T."/>
            <person name="Jakt M."/>
            <person name="Kanapin A."/>
            <person name="Katoh M."/>
            <person name="Kawasawa Y."/>
            <person name="Kelso J."/>
            <person name="Kitamura H."/>
            <person name="Kitano H."/>
            <person name="Kollias G."/>
            <person name="Krishnan S.P."/>
            <person name="Kruger A."/>
            <person name="Kummerfeld S.K."/>
            <person name="Kurochkin I.V."/>
            <person name="Lareau L.F."/>
            <person name="Lazarevic D."/>
            <person name="Lipovich L."/>
            <person name="Liu J."/>
            <person name="Liuni S."/>
            <person name="McWilliam S."/>
            <person name="Madan Babu M."/>
            <person name="Madera M."/>
            <person name="Marchionni L."/>
            <person name="Matsuda H."/>
            <person name="Matsuzawa S."/>
            <person name="Miki H."/>
            <person name="Mignone F."/>
            <person name="Miyake S."/>
            <person name="Morris K."/>
            <person name="Mottagui-Tabar S."/>
            <person name="Mulder N."/>
            <person name="Nakano N."/>
            <person name="Nakauchi H."/>
            <person name="Ng P."/>
            <person name="Nilsson R."/>
            <person name="Nishiguchi S."/>
            <person name="Nishikawa S."/>
            <person name="Nori F."/>
            <person name="Ohara O."/>
            <person name="Okazaki Y."/>
            <person name="Orlando V."/>
            <person name="Pang K.C."/>
            <person name="Pavan W.J."/>
            <person name="Pavesi G."/>
            <person name="Pesole G."/>
            <person name="Petrovsky N."/>
            <person name="Piazza S."/>
            <person name="Reed J."/>
            <person name="Reid J.F."/>
            <person name="Ring B.Z."/>
            <person name="Ringwald M."/>
            <person name="Rost B."/>
            <person name="Ruan Y."/>
            <person name="Salzberg S.L."/>
            <person name="Sandelin A."/>
            <person name="Schneider C."/>
            <person name="Schoenbach C."/>
            <person name="Sekiguchi K."/>
            <person name="Semple C.A."/>
            <person name="Seno S."/>
            <person name="Sessa L."/>
            <person name="Sheng Y."/>
            <person name="Shibata Y."/>
            <person name="Shimada H."/>
            <person name="Shimada K."/>
            <person name="Silva D."/>
            <person name="Sinclair B."/>
            <person name="Sperling S."/>
            <person name="Stupka E."/>
            <person name="Sugiura K."/>
            <person name="Sultana R."/>
            <person name="Takenaka Y."/>
            <person name="Taki K."/>
            <person name="Tammoja K."/>
            <person name="Tan S.L."/>
            <person name="Tang S."/>
            <person name="Taylor M.S."/>
            <person name="Tegner J."/>
            <person name="Teichmann S.A."/>
            <person name="Ueda H.R."/>
            <person name="van Nimwegen E."/>
            <person name="Verardo R."/>
            <person name="Wei C.L."/>
            <person name="Yagi K."/>
            <person name="Yamanishi H."/>
            <person name="Zabarovsky E."/>
            <person name="Zhu S."/>
            <person name="Zimmer A."/>
            <person name="Hide W."/>
            <person name="Bult C."/>
            <person name="Grimmond S.M."/>
            <person name="Teasdale R.D."/>
            <person name="Liu E.T."/>
            <person name="Brusic V."/>
            <person name="Quackenbush J."/>
            <person name="Wahlestedt C."/>
            <person name="Mattick J.S."/>
            <person name="Hume D.A."/>
            <person name="Kai C."/>
            <person name="Sasaki D."/>
            <person name="Tomaru Y."/>
            <person name="Fukuda S."/>
            <person name="Kanamori-Katayama M."/>
            <person name="Suzuki M."/>
            <person name="Aoki J."/>
            <person name="Arakawa T."/>
            <person name="Iida J."/>
            <person name="Imamura K."/>
            <person name="Itoh M."/>
            <person name="Kato T."/>
            <person name="Kawaji H."/>
            <person name="Kawagashira N."/>
            <person name="Kawashima T."/>
            <person name="Kojima M."/>
            <person name="Kondo S."/>
            <person name="Konno H."/>
            <person name="Nakano K."/>
            <person name="Ninomiya N."/>
            <person name="Nishio T."/>
            <person name="Okada M."/>
            <person name="Plessy C."/>
            <person name="Shibata K."/>
            <person name="Shiraki T."/>
            <person name="Suzuki S."/>
            <person name="Tagami M."/>
            <person name="Waki K."/>
            <person name="Watahiki A."/>
            <person name="Okamura-Oho Y."/>
            <person name="Suzuki H."/>
            <person name="Kawai J."/>
            <person name="Hayashizaki Y."/>
        </authorList>
    </citation>
    <scope>NUCLEOTIDE SEQUENCE [LARGE SCALE MRNA]</scope>
    <source>
        <strain>C57BL/6J</strain>
        <tissue>Embryo</tissue>
        <tissue>Visual cortex</tissue>
    </source>
</reference>
<reference key="2">
    <citation type="journal article" date="2009" name="PLoS Biol.">
        <title>Lineage-specific biology revealed by a finished genome assembly of the mouse.</title>
        <authorList>
            <person name="Church D.M."/>
            <person name="Goodstadt L."/>
            <person name="Hillier L.W."/>
            <person name="Zody M.C."/>
            <person name="Goldstein S."/>
            <person name="She X."/>
            <person name="Bult C.J."/>
            <person name="Agarwala R."/>
            <person name="Cherry J.L."/>
            <person name="DiCuccio M."/>
            <person name="Hlavina W."/>
            <person name="Kapustin Y."/>
            <person name="Meric P."/>
            <person name="Maglott D."/>
            <person name="Birtle Z."/>
            <person name="Marques A.C."/>
            <person name="Graves T."/>
            <person name="Zhou S."/>
            <person name="Teague B."/>
            <person name="Potamousis K."/>
            <person name="Churas C."/>
            <person name="Place M."/>
            <person name="Herschleb J."/>
            <person name="Runnheim R."/>
            <person name="Forrest D."/>
            <person name="Amos-Landgraf J."/>
            <person name="Schwartz D.C."/>
            <person name="Cheng Z."/>
            <person name="Lindblad-Toh K."/>
            <person name="Eichler E.E."/>
            <person name="Ponting C.P."/>
        </authorList>
    </citation>
    <scope>NUCLEOTIDE SEQUENCE [LARGE SCALE GENOMIC DNA]</scope>
    <source>
        <strain>C57BL/6J</strain>
    </source>
</reference>
<reference key="3">
    <citation type="journal article" date="2004" name="Genome Res.">
        <title>The status, quality, and expansion of the NIH full-length cDNA project: the Mammalian Gene Collection (MGC).</title>
        <authorList>
            <consortium name="The MGC Project Team"/>
        </authorList>
    </citation>
    <scope>NUCLEOTIDE SEQUENCE [LARGE SCALE MRNA]</scope>
    <source>
        <tissue>Eye</tissue>
    </source>
</reference>
<reference key="4">
    <citation type="journal article" date="2010" name="Cell">
        <title>A tissue-specific atlas of mouse protein phosphorylation and expression.</title>
        <authorList>
            <person name="Huttlin E.L."/>
            <person name="Jedrychowski M.P."/>
            <person name="Elias J.E."/>
            <person name="Goswami T."/>
            <person name="Rad R."/>
            <person name="Beausoleil S.A."/>
            <person name="Villen J."/>
            <person name="Haas W."/>
            <person name="Sowa M.E."/>
            <person name="Gygi S.P."/>
        </authorList>
    </citation>
    <scope>PHOSPHORYLATION [LARGE SCALE ANALYSIS] AT SER-30</scope>
    <scope>IDENTIFICATION BY MASS SPECTROMETRY [LARGE SCALE ANALYSIS]</scope>
    <source>
        <tissue>Brain</tissue>
    </source>
</reference>
<evidence type="ECO:0000256" key="1">
    <source>
        <dbReference type="SAM" id="MobiDB-lite"/>
    </source>
</evidence>
<evidence type="ECO:0000305" key="2"/>
<evidence type="ECO:0007744" key="3">
    <source>
    </source>
</evidence>
<keyword id="KW-0539">Nucleus</keyword>
<keyword id="KW-0597">Phosphoprotein</keyword>
<keyword id="KW-1185">Reference proteome</keyword>
<dbReference type="EMBL" id="AK003156">
    <property type="protein sequence ID" value="BAB22610.1"/>
    <property type="molecule type" value="mRNA"/>
</dbReference>
<dbReference type="EMBL" id="AK017585">
    <property type="protein sequence ID" value="BAB30822.1"/>
    <property type="molecule type" value="mRNA"/>
</dbReference>
<dbReference type="EMBL" id="AK158996">
    <property type="protein sequence ID" value="BAE34762.1"/>
    <property type="molecule type" value="mRNA"/>
</dbReference>
<dbReference type="EMBL" id="AL671887">
    <property type="status" value="NOT_ANNOTATED_CDS"/>
    <property type="molecule type" value="Genomic_DNA"/>
</dbReference>
<dbReference type="EMBL" id="BC027131">
    <property type="protein sequence ID" value="AAH27131.1"/>
    <property type="molecule type" value="mRNA"/>
</dbReference>
<dbReference type="CCDS" id="CCDS30420.1"/>
<dbReference type="RefSeq" id="NP_001025149.2">
    <property type="nucleotide sequence ID" value="NM_001029978.3"/>
</dbReference>
<dbReference type="RefSeq" id="NP_001346206.1">
    <property type="nucleotide sequence ID" value="NM_001359277.1"/>
</dbReference>
<dbReference type="RefSeq" id="NP_001346207.1">
    <property type="nucleotide sequence ID" value="NM_001359278.1"/>
</dbReference>
<dbReference type="RefSeq" id="NP_001346208.1">
    <property type="nucleotide sequence ID" value="NM_001359279.1"/>
</dbReference>
<dbReference type="RefSeq" id="XP_006528648.1">
    <property type="nucleotide sequence ID" value="XM_006528585.3"/>
</dbReference>
<dbReference type="RefSeq" id="XP_006528649.1">
    <property type="nucleotide sequence ID" value="XM_006528586.4"/>
</dbReference>
<dbReference type="RefSeq" id="XP_006528650.1">
    <property type="nucleotide sequence ID" value="XM_006528587.1"/>
</dbReference>
<dbReference type="RefSeq" id="XP_011246054.1">
    <property type="nucleotide sequence ID" value="XM_011247752.2"/>
</dbReference>
<dbReference type="RefSeq" id="XP_030107319.1">
    <property type="nucleotide sequence ID" value="XM_030251459.2"/>
</dbReference>
<dbReference type="RefSeq" id="XP_030107320.1">
    <property type="nucleotide sequence ID" value="XM_030251460.1"/>
</dbReference>
<dbReference type="RefSeq" id="XP_030107321.1">
    <property type="nucleotide sequence ID" value="XM_030251461.1"/>
</dbReference>
<dbReference type="FunCoup" id="Q8R0A5">
    <property type="interactions" value="9"/>
</dbReference>
<dbReference type="STRING" id="10090.ENSMUSP00000108724"/>
<dbReference type="GlyGen" id="Q8R0A5">
    <property type="glycosylation" value="1 site, 1 O-linked glycan (1 site)"/>
</dbReference>
<dbReference type="iPTMnet" id="Q8R0A5"/>
<dbReference type="PhosphoSitePlus" id="Q8R0A5"/>
<dbReference type="SwissPalm" id="Q8R0A5"/>
<dbReference type="PaxDb" id="10090-ENSMUSP00000059401"/>
<dbReference type="ProteomicsDB" id="262960"/>
<dbReference type="DNASU" id="594844"/>
<dbReference type="Ensembl" id="ENSMUST00000060904.11">
    <property type="protein sequence ID" value="ENSMUSP00000059401.5"/>
    <property type="gene ID" value="ENSMUSG00000044550.12"/>
</dbReference>
<dbReference type="Ensembl" id="ENSMUST00000113100.2">
    <property type="protein sequence ID" value="ENSMUSP00000108724.2"/>
    <property type="gene ID" value="ENSMUSG00000044550.12"/>
</dbReference>
<dbReference type="GeneID" id="594844"/>
<dbReference type="KEGG" id="mmu:594844"/>
<dbReference type="UCSC" id="uc009uir.2">
    <property type="organism name" value="mouse"/>
</dbReference>
<dbReference type="AGR" id="MGI:1913354"/>
<dbReference type="CTD" id="85012"/>
<dbReference type="MGI" id="MGI:1913354">
    <property type="gene designation" value="Tceal3"/>
</dbReference>
<dbReference type="VEuPathDB" id="HostDB:ENSMUSG00000044550"/>
<dbReference type="eggNOG" id="ENOG502RKY0">
    <property type="taxonomic scope" value="Eukaryota"/>
</dbReference>
<dbReference type="GeneTree" id="ENSGT00950000183164"/>
<dbReference type="HOGENOM" id="CLU_078412_1_0_1"/>
<dbReference type="InParanoid" id="Q8R0A5"/>
<dbReference type="OMA" id="MMRECAN"/>
<dbReference type="OrthoDB" id="9837766at2759"/>
<dbReference type="PhylomeDB" id="Q8R0A5"/>
<dbReference type="TreeFam" id="TF336871"/>
<dbReference type="BioGRID-ORCS" id="594844">
    <property type="hits" value="0 hits in 45 CRISPR screens"/>
</dbReference>
<dbReference type="ChiTaRS" id="Tceal3">
    <property type="organism name" value="mouse"/>
</dbReference>
<dbReference type="PRO" id="PR:Q8R0A5"/>
<dbReference type="Proteomes" id="UP000000589">
    <property type="component" value="Chromosome X"/>
</dbReference>
<dbReference type="RNAct" id="Q8R0A5">
    <property type="molecule type" value="protein"/>
</dbReference>
<dbReference type="Bgee" id="ENSMUSG00000044550">
    <property type="expression patterns" value="Expressed in dentate gyrus of hippocampal formation granule cell and 69 other cell types or tissues"/>
</dbReference>
<dbReference type="ExpressionAtlas" id="Q8R0A5">
    <property type="expression patterns" value="baseline and differential"/>
</dbReference>
<dbReference type="GO" id="GO:0005634">
    <property type="term" value="C:nucleus"/>
    <property type="evidence" value="ECO:0007669"/>
    <property type="project" value="UniProtKB-SubCell"/>
</dbReference>
<dbReference type="InterPro" id="IPR021156">
    <property type="entry name" value="TF_A-like/BEX"/>
</dbReference>
<dbReference type="Pfam" id="PF04538">
    <property type="entry name" value="BEX"/>
    <property type="match status" value="1"/>
</dbReference>